<name>LEP_PONPY</name>
<gene>
    <name type="primary">LEP</name>
    <name type="synonym">OB</name>
</gene>
<reference key="1">
    <citation type="submission" date="1997-04" db="EMBL/GenBank/DDBJ databases">
        <title>Cloning of obese genes from different species: a comparison of the gene structures and the sequences of the obese gene products, leptin.</title>
        <authorList>
            <person name="Schoner B."/>
            <person name="Basinski M.B."/>
            <person name="Smith D.P."/>
            <person name="Hsiung H.M."/>
            <person name="Zhang X."/>
            <person name="Rockey P.K."/>
            <person name="Rosteck P.R."/>
        </authorList>
    </citation>
    <scope>NUCLEOTIDE SEQUENCE [GENOMIC DNA]</scope>
</reference>
<feature type="chain" id="PRO_0000160607" description="Leptin">
    <location>
        <begin position="1"/>
        <end position="146"/>
    </location>
</feature>
<feature type="disulfide bond" evidence="1">
    <location>
        <begin position="96"/>
        <end position="146"/>
    </location>
</feature>
<protein>
    <recommendedName>
        <fullName>Leptin</fullName>
    </recommendedName>
    <alternativeName>
        <fullName>Obesity factor</fullName>
    </alternativeName>
</protein>
<organism>
    <name type="scientific">Pongo pygmaeus</name>
    <name type="common">Bornean orangutan</name>
    <dbReference type="NCBI Taxonomy" id="9600"/>
    <lineage>
        <taxon>Eukaryota</taxon>
        <taxon>Metazoa</taxon>
        <taxon>Chordata</taxon>
        <taxon>Craniata</taxon>
        <taxon>Vertebrata</taxon>
        <taxon>Euteleostomi</taxon>
        <taxon>Mammalia</taxon>
        <taxon>Eutheria</taxon>
        <taxon>Euarchontoglires</taxon>
        <taxon>Primates</taxon>
        <taxon>Haplorrhini</taxon>
        <taxon>Catarrhini</taxon>
        <taxon>Hominidae</taxon>
        <taxon>Pongo</taxon>
    </lineage>
</organism>
<evidence type="ECO:0000250" key="1"/>
<evidence type="ECO:0000250" key="2">
    <source>
        <dbReference type="UniProtKB" id="P41159"/>
    </source>
</evidence>
<evidence type="ECO:0000250" key="3">
    <source>
        <dbReference type="UniProtKB" id="P41160"/>
    </source>
</evidence>
<evidence type="ECO:0000250" key="4">
    <source>
        <dbReference type="UniProtKB" id="P50596"/>
    </source>
</evidence>
<evidence type="ECO:0000305" key="5"/>
<comment type="function">
    <text evidence="2 3 4">Key player in the regulation of energy balance and body weight control. Once released into the circulation, has central and peripheral effects by binding LEPR, found in many tissues, which results in the activation of several major signaling pathways (By similarity). In the hypothalamus, acts as an appetite-regulating factor that induces a decrease in food intake and an increase in energy consumption by inducing anorexinogenic factors and suppressing orexigenic neuropeptides, also regulates bone mass and secretion of hypothalamo-pituitary-adrenal hormones. In the periphery, increases basal metabolism, influences reproductive function, regulates pancreatic beta-cell function and insulin secretion, is pro-angiogenic for endothelial cell and affects innate and adaptive immunity (By similarity). In the arcuate nucleus of the hypothalamus, activates by depolarization POMC neurons inducing FOS and SOCS3 expression to release anorexigenic peptides and inhibits by hyperpolarization NPY neurons inducing SOCS3 with a consequent reduction on release of orexigenic peptides (By similarity). In addition to its known satiety inducing effect, has a modulatory role in nutrient absorption. In the intestine, reduces glucose absorption by enterocytes by activating PKC and leading to a sequential activation of p38, PI3K and ERK signaling pathways which exerts an inhibitory effect on glucose absorption (By similarity). Acts as a growth factor on certain tissues, through the activation of different signaling pathways increases expression of genes involved in cell cycle regulation such as CCND1, via JAK2-STAT3 pathway, or VEGFA, via MAPK1/3 and PI3K-AKT1 pathways (By similarity). May also play an apoptotic role via JAK2-STAT3 pathway and up-regulation of BIRC5 expression. Pro-angiogenic, has mitogenic activity on vascular endothelial cells and plays a role in matrix remodeling by regulating the expression of matrix metalloproteinases (MMPs) and tissue inhibitors of metalloproteinases (TIMPs). In innate immunity, modulates the activity and function of neutrophils by increasing chemotaxis and the secretion of oxygen radicals. Increases phagocytosis by macrophages and enhances secretion of pro-inflammatory mediators. Increases cytotoxic ability of NK cells. Plays a pro-inflammatory role, in synergy with IL1B, by inducing NOS2 which promotes the production of IL6, IL8 and Prostaglandin E2, through a signaling pathway that involves JAK2, PI3K, MAP2K1/MEK1 and MAPK14/p38 (By similarity). In adaptive immunity, promotes the switch of memory T-cells towards T helper-1 cell immune responses (By similarity). Increases CD4(+)CD25(-) T-cell proliferation and reduces autophagy during TCR (T-cell receptor) stimulation, through MTOR signaling pathway activation and BCL2 up-regulation (By similarity).</text>
</comment>
<comment type="subcellular location">
    <subcellularLocation>
        <location evidence="2">Secreted</location>
    </subcellularLocation>
</comment>
<comment type="similarity">
    <text evidence="5">Belongs to the leptin family.</text>
</comment>
<proteinExistence type="inferred from homology"/>
<sequence length="146" mass="16195">VPIQKVQDDTKTLIKTVITRINDISHTQSVSSKQKVTGLDFIPGLHPILTLSKMDQTLAVYQQILTSMPSRNVIQISNDLENLRDLLHVLAFSKSCHLPWASGLETLDRLGGVLEASGYSTEVVALSRLQRSLQDMLWQLDLSPGC</sequence>
<accession>Q95234</accession>
<keyword id="KW-1015">Disulfide bond</keyword>
<keyword id="KW-0550">Obesity</keyword>
<keyword id="KW-0964">Secreted</keyword>
<dbReference type="EMBL" id="U72873">
    <property type="protein sequence ID" value="AAB17092.1"/>
    <property type="molecule type" value="Genomic_DNA"/>
</dbReference>
<dbReference type="SMR" id="Q95234"/>
<dbReference type="GO" id="GO:0005615">
    <property type="term" value="C:extracellular space"/>
    <property type="evidence" value="ECO:0007669"/>
    <property type="project" value="TreeGrafter"/>
</dbReference>
<dbReference type="GO" id="GO:0005179">
    <property type="term" value="F:hormone activity"/>
    <property type="evidence" value="ECO:0007669"/>
    <property type="project" value="InterPro"/>
</dbReference>
<dbReference type="GO" id="GO:0051428">
    <property type="term" value="F:peptide hormone receptor binding"/>
    <property type="evidence" value="ECO:0007669"/>
    <property type="project" value="TreeGrafter"/>
</dbReference>
<dbReference type="GO" id="GO:1990051">
    <property type="term" value="P:activation of protein kinase C activity"/>
    <property type="evidence" value="ECO:0000250"/>
    <property type="project" value="UniProtKB"/>
</dbReference>
<dbReference type="GO" id="GO:0098868">
    <property type="term" value="P:bone growth"/>
    <property type="evidence" value="ECO:0000250"/>
    <property type="project" value="UniProtKB"/>
</dbReference>
<dbReference type="GO" id="GO:0044320">
    <property type="term" value="P:cellular response to leptin stimulus"/>
    <property type="evidence" value="ECO:0000250"/>
    <property type="project" value="UniProtKB"/>
</dbReference>
<dbReference type="GO" id="GO:0006112">
    <property type="term" value="P:energy reserve metabolic process"/>
    <property type="evidence" value="ECO:0007669"/>
    <property type="project" value="TreeGrafter"/>
</dbReference>
<dbReference type="GO" id="GO:0050892">
    <property type="term" value="P:intestinal absorption"/>
    <property type="evidence" value="ECO:0000250"/>
    <property type="project" value="UniProtKB"/>
</dbReference>
<dbReference type="GO" id="GO:0033210">
    <property type="term" value="P:leptin-mediated signaling pathway"/>
    <property type="evidence" value="ECO:0000250"/>
    <property type="project" value="UniProtKB"/>
</dbReference>
<dbReference type="GO" id="GO:0006629">
    <property type="term" value="P:lipid metabolic process"/>
    <property type="evidence" value="ECO:0007669"/>
    <property type="project" value="TreeGrafter"/>
</dbReference>
<dbReference type="GO" id="GO:0038108">
    <property type="term" value="P:negative regulation of appetite by leptin-mediated signaling pathway"/>
    <property type="evidence" value="ECO:0000250"/>
    <property type="project" value="UniProtKB"/>
</dbReference>
<dbReference type="GO" id="GO:0010507">
    <property type="term" value="P:negative regulation of autophagy"/>
    <property type="evidence" value="ECO:0000250"/>
    <property type="project" value="UniProtKB"/>
</dbReference>
<dbReference type="GO" id="GO:0046325">
    <property type="term" value="P:negative regulation of D-glucose import"/>
    <property type="evidence" value="ECO:0000250"/>
    <property type="project" value="UniProtKB"/>
</dbReference>
<dbReference type="GO" id="GO:0006909">
    <property type="term" value="P:phagocytosis"/>
    <property type="evidence" value="ECO:0000250"/>
    <property type="project" value="UniProtKB"/>
</dbReference>
<dbReference type="GO" id="GO:0032735">
    <property type="term" value="P:positive regulation of interleukin-12 production"/>
    <property type="evidence" value="ECO:0000250"/>
    <property type="project" value="UniProtKB"/>
</dbReference>
<dbReference type="GO" id="GO:0032755">
    <property type="term" value="P:positive regulation of interleukin-6 production"/>
    <property type="evidence" value="ECO:0000250"/>
    <property type="project" value="UniProtKB"/>
</dbReference>
<dbReference type="GO" id="GO:0032757">
    <property type="term" value="P:positive regulation of interleukin-8 production"/>
    <property type="evidence" value="ECO:0000250"/>
    <property type="project" value="UniProtKB"/>
</dbReference>
<dbReference type="GO" id="GO:0043410">
    <property type="term" value="P:positive regulation of MAPK cascade"/>
    <property type="evidence" value="ECO:0000250"/>
    <property type="project" value="UniProtKB"/>
</dbReference>
<dbReference type="GO" id="GO:1900745">
    <property type="term" value="P:positive regulation of p38MAPK cascade"/>
    <property type="evidence" value="ECO:0000250"/>
    <property type="project" value="UniProtKB"/>
</dbReference>
<dbReference type="GO" id="GO:0051897">
    <property type="term" value="P:positive regulation of phosphatidylinositol 3-kinase/protein kinase B signal transduction"/>
    <property type="evidence" value="ECO:0000250"/>
    <property type="project" value="UniProtKB"/>
</dbReference>
<dbReference type="GO" id="GO:0046427">
    <property type="term" value="P:positive regulation of receptor signaling pathway via JAK-STAT"/>
    <property type="evidence" value="ECO:0000250"/>
    <property type="project" value="UniProtKB"/>
</dbReference>
<dbReference type="GO" id="GO:0042102">
    <property type="term" value="P:positive regulation of T cell proliferation"/>
    <property type="evidence" value="ECO:0000250"/>
    <property type="project" value="UniProtKB"/>
</dbReference>
<dbReference type="GO" id="GO:0032008">
    <property type="term" value="P:positive regulation of TOR signaling"/>
    <property type="evidence" value="ECO:0000250"/>
    <property type="project" value="UniProtKB"/>
</dbReference>
<dbReference type="GO" id="GO:0032760">
    <property type="term" value="P:positive regulation of tumor necrosis factor production"/>
    <property type="evidence" value="ECO:0000250"/>
    <property type="project" value="UniProtKB"/>
</dbReference>
<dbReference type="GO" id="GO:0032310">
    <property type="term" value="P:prostaglandin secretion"/>
    <property type="evidence" value="ECO:0000250"/>
    <property type="project" value="UniProtKB"/>
</dbReference>
<dbReference type="GO" id="GO:0045765">
    <property type="term" value="P:regulation of angiogenesis"/>
    <property type="evidence" value="ECO:0000250"/>
    <property type="project" value="UniProtKB"/>
</dbReference>
<dbReference type="GO" id="GO:0046850">
    <property type="term" value="P:regulation of bone remodeling"/>
    <property type="evidence" value="ECO:0000250"/>
    <property type="project" value="UniProtKB"/>
</dbReference>
<dbReference type="GO" id="GO:0090335">
    <property type="term" value="P:regulation of brown fat cell differentiation"/>
    <property type="evidence" value="ECO:0000250"/>
    <property type="project" value="UniProtKB"/>
</dbReference>
<dbReference type="GO" id="GO:0051726">
    <property type="term" value="P:regulation of cell cycle"/>
    <property type="evidence" value="ECO:0000250"/>
    <property type="project" value="UniProtKB"/>
</dbReference>
<dbReference type="GO" id="GO:1900015">
    <property type="term" value="P:regulation of cytokine production involved in inflammatory response"/>
    <property type="evidence" value="ECO:0000250"/>
    <property type="project" value="UniProtKB"/>
</dbReference>
<dbReference type="GO" id="GO:0001936">
    <property type="term" value="P:regulation of endothelial cell proliferation"/>
    <property type="evidence" value="ECO:0000250"/>
    <property type="project" value="UniProtKB"/>
</dbReference>
<dbReference type="GO" id="GO:0032814">
    <property type="term" value="P:regulation of natural killer cell activation"/>
    <property type="evidence" value="ECO:0000250"/>
    <property type="project" value="UniProtKB"/>
</dbReference>
<dbReference type="GO" id="GO:0042269">
    <property type="term" value="P:regulation of natural killer cell mediated cytotoxicity"/>
    <property type="evidence" value="ECO:0000250"/>
    <property type="project" value="UniProtKB"/>
</dbReference>
<dbReference type="GO" id="GO:0032817">
    <property type="term" value="P:regulation of natural killer cell proliferation"/>
    <property type="evidence" value="ECO:0000250"/>
    <property type="project" value="UniProtKB"/>
</dbReference>
<dbReference type="GO" id="GO:0050999">
    <property type="term" value="P:regulation of nitric-oxide synthase activity"/>
    <property type="evidence" value="ECO:0000250"/>
    <property type="project" value="UniProtKB"/>
</dbReference>
<dbReference type="GO" id="GO:0032868">
    <property type="term" value="P:response to insulin"/>
    <property type="evidence" value="ECO:0007669"/>
    <property type="project" value="TreeGrafter"/>
</dbReference>
<dbReference type="GO" id="GO:0019953">
    <property type="term" value="P:sexual reproduction"/>
    <property type="evidence" value="ECO:0000250"/>
    <property type="project" value="UniProtKB"/>
</dbReference>
<dbReference type="GO" id="GO:0030217">
    <property type="term" value="P:T cell differentiation"/>
    <property type="evidence" value="ECO:0000250"/>
    <property type="project" value="UniProtKB"/>
</dbReference>
<dbReference type="FunFam" id="1.20.1250.10:FF:000008">
    <property type="entry name" value="Leptin"/>
    <property type="match status" value="1"/>
</dbReference>
<dbReference type="Gene3D" id="1.20.1250.10">
    <property type="match status" value="1"/>
</dbReference>
<dbReference type="InterPro" id="IPR009079">
    <property type="entry name" value="4_helix_cytokine-like_core"/>
</dbReference>
<dbReference type="InterPro" id="IPR000065">
    <property type="entry name" value="Leptin"/>
</dbReference>
<dbReference type="PANTHER" id="PTHR11724">
    <property type="entry name" value="LEPTIN"/>
    <property type="match status" value="1"/>
</dbReference>
<dbReference type="PANTHER" id="PTHR11724:SF1">
    <property type="entry name" value="LEPTIN"/>
    <property type="match status" value="1"/>
</dbReference>
<dbReference type="Pfam" id="PF02024">
    <property type="entry name" value="Leptin"/>
    <property type="match status" value="1"/>
</dbReference>
<dbReference type="PIRSF" id="PIRSF001837">
    <property type="entry name" value="Leptin"/>
    <property type="match status" value="1"/>
</dbReference>
<dbReference type="PRINTS" id="PR00495">
    <property type="entry name" value="LEPTIN"/>
</dbReference>
<dbReference type="SUPFAM" id="SSF47266">
    <property type="entry name" value="4-helical cytokines"/>
    <property type="match status" value="1"/>
</dbReference>